<name>THIE_LACP3</name>
<reference key="1">
    <citation type="journal article" date="2006" name="Proc. Natl. Acad. Sci. U.S.A.">
        <title>Comparative genomics of the lactic acid bacteria.</title>
        <authorList>
            <person name="Makarova K.S."/>
            <person name="Slesarev A."/>
            <person name="Wolf Y.I."/>
            <person name="Sorokin A."/>
            <person name="Mirkin B."/>
            <person name="Koonin E.V."/>
            <person name="Pavlov A."/>
            <person name="Pavlova N."/>
            <person name="Karamychev V."/>
            <person name="Polouchine N."/>
            <person name="Shakhova V."/>
            <person name="Grigoriev I."/>
            <person name="Lou Y."/>
            <person name="Rohksar D."/>
            <person name="Lucas S."/>
            <person name="Huang K."/>
            <person name="Goodstein D.M."/>
            <person name="Hawkins T."/>
            <person name="Plengvidhya V."/>
            <person name="Welker D."/>
            <person name="Hughes J."/>
            <person name="Goh Y."/>
            <person name="Benson A."/>
            <person name="Baldwin K."/>
            <person name="Lee J.-H."/>
            <person name="Diaz-Muniz I."/>
            <person name="Dosti B."/>
            <person name="Smeianov V."/>
            <person name="Wechter W."/>
            <person name="Barabote R."/>
            <person name="Lorca G."/>
            <person name="Altermann E."/>
            <person name="Barrangou R."/>
            <person name="Ganesan B."/>
            <person name="Xie Y."/>
            <person name="Rawsthorne H."/>
            <person name="Tamir D."/>
            <person name="Parker C."/>
            <person name="Breidt F."/>
            <person name="Broadbent J.R."/>
            <person name="Hutkins R."/>
            <person name="O'Sullivan D."/>
            <person name="Steele J."/>
            <person name="Unlu G."/>
            <person name="Saier M.H. Jr."/>
            <person name="Klaenhammer T."/>
            <person name="Richardson P."/>
            <person name="Kozyavkin S."/>
            <person name="Weimer B.C."/>
            <person name="Mills D.A."/>
        </authorList>
    </citation>
    <scope>NUCLEOTIDE SEQUENCE [LARGE SCALE GENOMIC DNA]</scope>
    <source>
        <strain>ATCC 334 / BCRC 17002 / CCUG 31169 / CIP 107868 / KCTC 3260 / NRRL B-441</strain>
    </source>
</reference>
<protein>
    <recommendedName>
        <fullName evidence="1">Thiamine-phosphate synthase</fullName>
        <shortName evidence="1">TP synthase</shortName>
        <shortName evidence="1">TPS</shortName>
        <ecNumber evidence="1">2.5.1.3</ecNumber>
    </recommendedName>
    <alternativeName>
        <fullName evidence="1">Thiamine-phosphate pyrophosphorylase</fullName>
        <shortName evidence="1">TMP pyrophosphorylase</shortName>
        <shortName evidence="1">TMP-PPase</shortName>
    </alternativeName>
</protein>
<feature type="chain" id="PRO_0000336401" description="Thiamine-phosphate synthase">
    <location>
        <begin position="1"/>
        <end position="213"/>
    </location>
</feature>
<feature type="binding site" evidence="1">
    <location>
        <begin position="38"/>
        <end position="42"/>
    </location>
    <ligand>
        <name>4-amino-2-methyl-5-(diphosphooxymethyl)pyrimidine</name>
        <dbReference type="ChEBI" id="CHEBI:57841"/>
    </ligand>
</feature>
<feature type="binding site" evidence="1">
    <location>
        <position position="70"/>
    </location>
    <ligand>
        <name>4-amino-2-methyl-5-(diphosphooxymethyl)pyrimidine</name>
        <dbReference type="ChEBI" id="CHEBI:57841"/>
    </ligand>
</feature>
<feature type="binding site" evidence="1">
    <location>
        <position position="71"/>
    </location>
    <ligand>
        <name>Mg(2+)</name>
        <dbReference type="ChEBI" id="CHEBI:18420"/>
    </ligand>
</feature>
<feature type="binding site" evidence="1">
    <location>
        <position position="90"/>
    </location>
    <ligand>
        <name>Mg(2+)</name>
        <dbReference type="ChEBI" id="CHEBI:18420"/>
    </ligand>
</feature>
<feature type="binding site" evidence="1">
    <location>
        <position position="109"/>
    </location>
    <ligand>
        <name>4-amino-2-methyl-5-(diphosphooxymethyl)pyrimidine</name>
        <dbReference type="ChEBI" id="CHEBI:57841"/>
    </ligand>
</feature>
<feature type="binding site" evidence="1">
    <location>
        <begin position="135"/>
        <end position="137"/>
    </location>
    <ligand>
        <name>2-[(2R,5Z)-2-carboxy-4-methylthiazol-5(2H)-ylidene]ethyl phosphate</name>
        <dbReference type="ChEBI" id="CHEBI:62899"/>
    </ligand>
</feature>
<feature type="binding site" evidence="1">
    <location>
        <position position="138"/>
    </location>
    <ligand>
        <name>4-amino-2-methyl-5-(diphosphooxymethyl)pyrimidine</name>
        <dbReference type="ChEBI" id="CHEBI:57841"/>
    </ligand>
</feature>
<feature type="binding site" evidence="1">
    <location>
        <position position="165"/>
    </location>
    <ligand>
        <name>2-[(2R,5Z)-2-carboxy-4-methylthiazol-5(2H)-ylidene]ethyl phosphate</name>
        <dbReference type="ChEBI" id="CHEBI:62899"/>
    </ligand>
</feature>
<feature type="binding site" evidence="1">
    <location>
        <begin position="185"/>
        <end position="186"/>
    </location>
    <ligand>
        <name>2-[(2R,5Z)-2-carboxy-4-methylthiazol-5(2H)-ylidene]ethyl phosphate</name>
        <dbReference type="ChEBI" id="CHEBI:62899"/>
    </ligand>
</feature>
<organism>
    <name type="scientific">Lacticaseibacillus paracasei (strain ATCC 334 / BCRC 17002 / CCUG 31169 / CIP 107868 / KCTC 3260 / NRRL B-441)</name>
    <name type="common">Lactobacillus paracasei</name>
    <dbReference type="NCBI Taxonomy" id="321967"/>
    <lineage>
        <taxon>Bacteria</taxon>
        <taxon>Bacillati</taxon>
        <taxon>Bacillota</taxon>
        <taxon>Bacilli</taxon>
        <taxon>Lactobacillales</taxon>
        <taxon>Lactobacillaceae</taxon>
        <taxon>Lacticaseibacillus</taxon>
    </lineage>
</organism>
<evidence type="ECO:0000255" key="1">
    <source>
        <dbReference type="HAMAP-Rule" id="MF_00097"/>
    </source>
</evidence>
<accession>Q03CB2</accession>
<sequence length="213" mass="22637">MNATDLKLYLVTHRYDDNEATFLAKIAAACENSVTMVQLREKMLSTRAYFELAQRVKLITDRYQIPLIIDDRVDICLAVDAAGVHIGDDELPVAMTRQLIGPDKVLGVSTKTVETAVAAVAAGADYLGVGAIFPTQTKANAAVTPIATLKAITAQVAVPVVAIGGVKEANLATFKDTGIAGVAIVSEIMQAPDIAHKVQALRTKLKAVLPNDR</sequence>
<keyword id="KW-0460">Magnesium</keyword>
<keyword id="KW-0479">Metal-binding</keyword>
<keyword id="KW-1185">Reference proteome</keyword>
<keyword id="KW-0784">Thiamine biosynthesis</keyword>
<keyword id="KW-0808">Transferase</keyword>
<gene>
    <name evidence="1" type="primary">thiE</name>
    <name type="ordered locus">LSEI_0300</name>
</gene>
<dbReference type="EC" id="2.5.1.3" evidence="1"/>
<dbReference type="EMBL" id="CP000423">
    <property type="protein sequence ID" value="ABJ69160.1"/>
    <property type="molecule type" value="Genomic_DNA"/>
</dbReference>
<dbReference type="RefSeq" id="WP_011674047.1">
    <property type="nucleotide sequence ID" value="NC_008526.1"/>
</dbReference>
<dbReference type="RefSeq" id="YP_805602.1">
    <property type="nucleotide sequence ID" value="NC_008526.1"/>
</dbReference>
<dbReference type="SMR" id="Q03CB2"/>
<dbReference type="STRING" id="321967.LSEI_0300"/>
<dbReference type="PaxDb" id="321967-LSEI_0300"/>
<dbReference type="KEGG" id="lca:LSEI_0300"/>
<dbReference type="PATRIC" id="fig|321967.11.peg.324"/>
<dbReference type="HOGENOM" id="CLU_018272_3_2_9"/>
<dbReference type="UniPathway" id="UPA00060">
    <property type="reaction ID" value="UER00141"/>
</dbReference>
<dbReference type="Proteomes" id="UP000001651">
    <property type="component" value="Chromosome"/>
</dbReference>
<dbReference type="GO" id="GO:0005737">
    <property type="term" value="C:cytoplasm"/>
    <property type="evidence" value="ECO:0007669"/>
    <property type="project" value="TreeGrafter"/>
</dbReference>
<dbReference type="GO" id="GO:0000287">
    <property type="term" value="F:magnesium ion binding"/>
    <property type="evidence" value="ECO:0007669"/>
    <property type="project" value="UniProtKB-UniRule"/>
</dbReference>
<dbReference type="GO" id="GO:0004789">
    <property type="term" value="F:thiamine-phosphate diphosphorylase activity"/>
    <property type="evidence" value="ECO:0007669"/>
    <property type="project" value="UniProtKB-UniRule"/>
</dbReference>
<dbReference type="GO" id="GO:0009228">
    <property type="term" value="P:thiamine biosynthetic process"/>
    <property type="evidence" value="ECO:0007669"/>
    <property type="project" value="UniProtKB-KW"/>
</dbReference>
<dbReference type="GO" id="GO:0009229">
    <property type="term" value="P:thiamine diphosphate biosynthetic process"/>
    <property type="evidence" value="ECO:0007669"/>
    <property type="project" value="UniProtKB-UniRule"/>
</dbReference>
<dbReference type="CDD" id="cd00564">
    <property type="entry name" value="TMP_TenI"/>
    <property type="match status" value="1"/>
</dbReference>
<dbReference type="FunFam" id="3.20.20.70:FF:000096">
    <property type="entry name" value="Thiamine-phosphate synthase"/>
    <property type="match status" value="1"/>
</dbReference>
<dbReference type="Gene3D" id="3.20.20.70">
    <property type="entry name" value="Aldolase class I"/>
    <property type="match status" value="1"/>
</dbReference>
<dbReference type="HAMAP" id="MF_00097">
    <property type="entry name" value="TMP_synthase"/>
    <property type="match status" value="1"/>
</dbReference>
<dbReference type="InterPro" id="IPR013785">
    <property type="entry name" value="Aldolase_TIM"/>
</dbReference>
<dbReference type="InterPro" id="IPR036206">
    <property type="entry name" value="ThiamineP_synth_sf"/>
</dbReference>
<dbReference type="InterPro" id="IPR022998">
    <property type="entry name" value="ThiamineP_synth_TenI"/>
</dbReference>
<dbReference type="InterPro" id="IPR034291">
    <property type="entry name" value="TMP_synthase"/>
</dbReference>
<dbReference type="NCBIfam" id="TIGR00693">
    <property type="entry name" value="thiE"/>
    <property type="match status" value="1"/>
</dbReference>
<dbReference type="PANTHER" id="PTHR20857">
    <property type="entry name" value="THIAMINE-PHOSPHATE PYROPHOSPHORYLASE"/>
    <property type="match status" value="1"/>
</dbReference>
<dbReference type="PANTHER" id="PTHR20857:SF15">
    <property type="entry name" value="THIAMINE-PHOSPHATE SYNTHASE"/>
    <property type="match status" value="1"/>
</dbReference>
<dbReference type="Pfam" id="PF02581">
    <property type="entry name" value="TMP-TENI"/>
    <property type="match status" value="1"/>
</dbReference>
<dbReference type="SUPFAM" id="SSF51391">
    <property type="entry name" value="Thiamin phosphate synthase"/>
    <property type="match status" value="1"/>
</dbReference>
<comment type="function">
    <text evidence="1">Condenses 4-methyl-5-(beta-hydroxyethyl)thiazole monophosphate (THZ-P) and 2-methyl-4-amino-5-hydroxymethyl pyrimidine pyrophosphate (HMP-PP) to form thiamine monophosphate (TMP).</text>
</comment>
<comment type="catalytic activity">
    <reaction evidence="1">
        <text>2-[(2R,5Z)-2-carboxy-4-methylthiazol-5(2H)-ylidene]ethyl phosphate + 4-amino-2-methyl-5-(diphosphooxymethyl)pyrimidine + 2 H(+) = thiamine phosphate + CO2 + diphosphate</text>
        <dbReference type="Rhea" id="RHEA:47844"/>
        <dbReference type="ChEBI" id="CHEBI:15378"/>
        <dbReference type="ChEBI" id="CHEBI:16526"/>
        <dbReference type="ChEBI" id="CHEBI:33019"/>
        <dbReference type="ChEBI" id="CHEBI:37575"/>
        <dbReference type="ChEBI" id="CHEBI:57841"/>
        <dbReference type="ChEBI" id="CHEBI:62899"/>
        <dbReference type="EC" id="2.5.1.3"/>
    </reaction>
</comment>
<comment type="catalytic activity">
    <reaction evidence="1">
        <text>2-(2-carboxy-4-methylthiazol-5-yl)ethyl phosphate + 4-amino-2-methyl-5-(diphosphooxymethyl)pyrimidine + 2 H(+) = thiamine phosphate + CO2 + diphosphate</text>
        <dbReference type="Rhea" id="RHEA:47848"/>
        <dbReference type="ChEBI" id="CHEBI:15378"/>
        <dbReference type="ChEBI" id="CHEBI:16526"/>
        <dbReference type="ChEBI" id="CHEBI:33019"/>
        <dbReference type="ChEBI" id="CHEBI:37575"/>
        <dbReference type="ChEBI" id="CHEBI:57841"/>
        <dbReference type="ChEBI" id="CHEBI:62890"/>
        <dbReference type="EC" id="2.5.1.3"/>
    </reaction>
</comment>
<comment type="catalytic activity">
    <reaction evidence="1">
        <text>4-methyl-5-(2-phosphooxyethyl)-thiazole + 4-amino-2-methyl-5-(diphosphooxymethyl)pyrimidine + H(+) = thiamine phosphate + diphosphate</text>
        <dbReference type="Rhea" id="RHEA:22328"/>
        <dbReference type="ChEBI" id="CHEBI:15378"/>
        <dbReference type="ChEBI" id="CHEBI:33019"/>
        <dbReference type="ChEBI" id="CHEBI:37575"/>
        <dbReference type="ChEBI" id="CHEBI:57841"/>
        <dbReference type="ChEBI" id="CHEBI:58296"/>
        <dbReference type="EC" id="2.5.1.3"/>
    </reaction>
</comment>
<comment type="cofactor">
    <cofactor evidence="1">
        <name>Mg(2+)</name>
        <dbReference type="ChEBI" id="CHEBI:18420"/>
    </cofactor>
    <text evidence="1">Binds 1 Mg(2+) ion per subunit.</text>
</comment>
<comment type="pathway">
    <text evidence="1">Cofactor biosynthesis; thiamine diphosphate biosynthesis; thiamine phosphate from 4-amino-2-methyl-5-diphosphomethylpyrimidine and 4-methyl-5-(2-phosphoethyl)-thiazole: step 1/1.</text>
</comment>
<comment type="similarity">
    <text evidence="1">Belongs to the thiamine-phosphate synthase family.</text>
</comment>
<proteinExistence type="inferred from homology"/>